<name>MURD_STRSV</name>
<keyword id="KW-0067">ATP-binding</keyword>
<keyword id="KW-0131">Cell cycle</keyword>
<keyword id="KW-0132">Cell division</keyword>
<keyword id="KW-0133">Cell shape</keyword>
<keyword id="KW-0961">Cell wall biogenesis/degradation</keyword>
<keyword id="KW-0963">Cytoplasm</keyword>
<keyword id="KW-0436">Ligase</keyword>
<keyword id="KW-0547">Nucleotide-binding</keyword>
<keyword id="KW-0573">Peptidoglycan synthesis</keyword>
<keyword id="KW-1185">Reference proteome</keyword>
<protein>
    <recommendedName>
        <fullName evidence="1">UDP-N-acetylmuramoylalanine--D-glutamate ligase</fullName>
        <ecNumber evidence="1">6.3.2.9</ecNumber>
    </recommendedName>
    <alternativeName>
        <fullName evidence="1">D-glutamic acid-adding enzyme</fullName>
    </alternativeName>
    <alternativeName>
        <fullName evidence="1">UDP-N-acetylmuramoyl-L-alanyl-D-glutamate synthetase</fullName>
    </alternativeName>
</protein>
<gene>
    <name evidence="1" type="primary">murD</name>
    <name type="ordered locus">SSA_0652</name>
</gene>
<comment type="function">
    <text evidence="1">Cell wall formation. Catalyzes the addition of glutamate to the nucleotide precursor UDP-N-acetylmuramoyl-L-alanine (UMA).</text>
</comment>
<comment type="catalytic activity">
    <reaction evidence="1">
        <text>UDP-N-acetyl-alpha-D-muramoyl-L-alanine + D-glutamate + ATP = UDP-N-acetyl-alpha-D-muramoyl-L-alanyl-D-glutamate + ADP + phosphate + H(+)</text>
        <dbReference type="Rhea" id="RHEA:16429"/>
        <dbReference type="ChEBI" id="CHEBI:15378"/>
        <dbReference type="ChEBI" id="CHEBI:29986"/>
        <dbReference type="ChEBI" id="CHEBI:30616"/>
        <dbReference type="ChEBI" id="CHEBI:43474"/>
        <dbReference type="ChEBI" id="CHEBI:83898"/>
        <dbReference type="ChEBI" id="CHEBI:83900"/>
        <dbReference type="ChEBI" id="CHEBI:456216"/>
        <dbReference type="EC" id="6.3.2.9"/>
    </reaction>
</comment>
<comment type="pathway">
    <text evidence="1">Cell wall biogenesis; peptidoglycan biosynthesis.</text>
</comment>
<comment type="subcellular location">
    <subcellularLocation>
        <location evidence="1">Cytoplasm</location>
    </subcellularLocation>
</comment>
<comment type="similarity">
    <text evidence="1">Belongs to the MurCDEF family.</text>
</comment>
<reference key="1">
    <citation type="journal article" date="2007" name="J. Bacteriol.">
        <title>Genome of the opportunistic pathogen Streptococcus sanguinis.</title>
        <authorList>
            <person name="Xu P."/>
            <person name="Alves J.M."/>
            <person name="Kitten T."/>
            <person name="Brown A."/>
            <person name="Chen Z."/>
            <person name="Ozaki L.S."/>
            <person name="Manque P."/>
            <person name="Ge X."/>
            <person name="Serrano M.G."/>
            <person name="Puiu D."/>
            <person name="Hendricks S."/>
            <person name="Wang Y."/>
            <person name="Chaplin M.D."/>
            <person name="Akan D."/>
            <person name="Paik S."/>
            <person name="Peterson D.L."/>
            <person name="Macrina F.L."/>
            <person name="Buck G.A."/>
        </authorList>
    </citation>
    <scope>NUCLEOTIDE SEQUENCE [LARGE SCALE GENOMIC DNA]</scope>
    <source>
        <strain>SK36</strain>
    </source>
</reference>
<feature type="chain" id="PRO_0000301452" description="UDP-N-acetylmuramoylalanine--D-glutamate ligase">
    <location>
        <begin position="1"/>
        <end position="450"/>
    </location>
</feature>
<feature type="binding site" evidence="1">
    <location>
        <begin position="119"/>
        <end position="125"/>
    </location>
    <ligand>
        <name>ATP</name>
        <dbReference type="ChEBI" id="CHEBI:30616"/>
    </ligand>
</feature>
<dbReference type="EC" id="6.3.2.9" evidence="1"/>
<dbReference type="EMBL" id="CP000387">
    <property type="protein sequence ID" value="ABN44090.1"/>
    <property type="molecule type" value="Genomic_DNA"/>
</dbReference>
<dbReference type="RefSeq" id="WP_011836645.1">
    <property type="nucleotide sequence ID" value="NC_009009.1"/>
</dbReference>
<dbReference type="RefSeq" id="YP_001034640.1">
    <property type="nucleotide sequence ID" value="NC_009009.1"/>
</dbReference>
<dbReference type="SMR" id="A3CLN5"/>
<dbReference type="STRING" id="388919.SSA_0652"/>
<dbReference type="KEGG" id="ssa:SSA_0652"/>
<dbReference type="PATRIC" id="fig|388919.9.peg.626"/>
<dbReference type="eggNOG" id="COG0771">
    <property type="taxonomic scope" value="Bacteria"/>
</dbReference>
<dbReference type="HOGENOM" id="CLU_032540_0_1_9"/>
<dbReference type="OrthoDB" id="9809796at2"/>
<dbReference type="UniPathway" id="UPA00219"/>
<dbReference type="Proteomes" id="UP000002148">
    <property type="component" value="Chromosome"/>
</dbReference>
<dbReference type="GO" id="GO:0005737">
    <property type="term" value="C:cytoplasm"/>
    <property type="evidence" value="ECO:0007669"/>
    <property type="project" value="UniProtKB-SubCell"/>
</dbReference>
<dbReference type="GO" id="GO:0005524">
    <property type="term" value="F:ATP binding"/>
    <property type="evidence" value="ECO:0007669"/>
    <property type="project" value="UniProtKB-UniRule"/>
</dbReference>
<dbReference type="GO" id="GO:0008764">
    <property type="term" value="F:UDP-N-acetylmuramoylalanine-D-glutamate ligase activity"/>
    <property type="evidence" value="ECO:0007669"/>
    <property type="project" value="UniProtKB-UniRule"/>
</dbReference>
<dbReference type="GO" id="GO:0051301">
    <property type="term" value="P:cell division"/>
    <property type="evidence" value="ECO:0007669"/>
    <property type="project" value="UniProtKB-KW"/>
</dbReference>
<dbReference type="GO" id="GO:0071555">
    <property type="term" value="P:cell wall organization"/>
    <property type="evidence" value="ECO:0007669"/>
    <property type="project" value="UniProtKB-KW"/>
</dbReference>
<dbReference type="GO" id="GO:0009252">
    <property type="term" value="P:peptidoglycan biosynthetic process"/>
    <property type="evidence" value="ECO:0007669"/>
    <property type="project" value="UniProtKB-UniRule"/>
</dbReference>
<dbReference type="GO" id="GO:0008360">
    <property type="term" value="P:regulation of cell shape"/>
    <property type="evidence" value="ECO:0007669"/>
    <property type="project" value="UniProtKB-KW"/>
</dbReference>
<dbReference type="Gene3D" id="3.90.190.20">
    <property type="entry name" value="Mur ligase, C-terminal domain"/>
    <property type="match status" value="1"/>
</dbReference>
<dbReference type="Gene3D" id="3.40.1190.10">
    <property type="entry name" value="Mur-like, catalytic domain"/>
    <property type="match status" value="1"/>
</dbReference>
<dbReference type="Gene3D" id="3.40.50.720">
    <property type="entry name" value="NAD(P)-binding Rossmann-like Domain"/>
    <property type="match status" value="1"/>
</dbReference>
<dbReference type="HAMAP" id="MF_00639">
    <property type="entry name" value="MurD"/>
    <property type="match status" value="1"/>
</dbReference>
<dbReference type="InterPro" id="IPR036565">
    <property type="entry name" value="Mur-like_cat_sf"/>
</dbReference>
<dbReference type="InterPro" id="IPR004101">
    <property type="entry name" value="Mur_ligase_C"/>
</dbReference>
<dbReference type="InterPro" id="IPR036615">
    <property type="entry name" value="Mur_ligase_C_dom_sf"/>
</dbReference>
<dbReference type="InterPro" id="IPR013221">
    <property type="entry name" value="Mur_ligase_cen"/>
</dbReference>
<dbReference type="InterPro" id="IPR005762">
    <property type="entry name" value="MurD"/>
</dbReference>
<dbReference type="NCBIfam" id="TIGR01087">
    <property type="entry name" value="murD"/>
    <property type="match status" value="1"/>
</dbReference>
<dbReference type="PANTHER" id="PTHR43692">
    <property type="entry name" value="UDP-N-ACETYLMURAMOYLALANINE--D-GLUTAMATE LIGASE"/>
    <property type="match status" value="1"/>
</dbReference>
<dbReference type="PANTHER" id="PTHR43692:SF1">
    <property type="entry name" value="UDP-N-ACETYLMURAMOYLALANINE--D-GLUTAMATE LIGASE"/>
    <property type="match status" value="1"/>
</dbReference>
<dbReference type="Pfam" id="PF02875">
    <property type="entry name" value="Mur_ligase_C"/>
    <property type="match status" value="1"/>
</dbReference>
<dbReference type="Pfam" id="PF08245">
    <property type="entry name" value="Mur_ligase_M"/>
    <property type="match status" value="1"/>
</dbReference>
<dbReference type="Pfam" id="PF21799">
    <property type="entry name" value="MurD-like_N"/>
    <property type="match status" value="1"/>
</dbReference>
<dbReference type="SUPFAM" id="SSF51984">
    <property type="entry name" value="MurCD N-terminal domain"/>
    <property type="match status" value="1"/>
</dbReference>
<dbReference type="SUPFAM" id="SSF53623">
    <property type="entry name" value="MurD-like peptide ligases, catalytic domain"/>
    <property type="match status" value="1"/>
</dbReference>
<dbReference type="SUPFAM" id="SSF53244">
    <property type="entry name" value="MurD-like peptide ligases, peptide-binding domain"/>
    <property type="match status" value="1"/>
</dbReference>
<accession>A3CLN5</accession>
<organism>
    <name type="scientific">Streptococcus sanguinis (strain SK36)</name>
    <dbReference type="NCBI Taxonomy" id="388919"/>
    <lineage>
        <taxon>Bacteria</taxon>
        <taxon>Bacillati</taxon>
        <taxon>Bacillota</taxon>
        <taxon>Bacilli</taxon>
        <taxon>Lactobacillales</taxon>
        <taxon>Streptococcaceae</taxon>
        <taxon>Streptococcus</taxon>
    </lineage>
</organism>
<proteinExistence type="inferred from homology"/>
<sequence>MKKIANFANKKVLVLGLAKSGESAARLLDKLGAIVTVNDGKPFEENPAAQSLLEEGIKVVTGGHPLELLDEDFELMVKNPGIPYDNAMVVRALEKKIPVITEVELAYLISEAPIIGITGSNGKTTTTTMIAQVLTAGGQNGLLSGNIGFPASQVAQTASSKDMLVMELSSFQLMGIEDFHPQIAVITNLMPTHLDYHGSVEEYAAAKWNIQKNMTADDYLVLNFNQDWAKEMASQTQATVVPFSTTEKVDGAYLEGDVLTFRGEAIMQVAEIGVPGSHNVENALATIAVAKLRGIDNQTIKEVLSAFGGVKHRLQYVGQVNEVAFYNDSKSTNILATQKALSGFDNSKVILIAGGLDRGNEFDELVPDLKGLKKMVILGQSAARVKRAADQAGVSYLDATDVRDAAHKAFAQAEPGDIVLLSPANASWDMYSNFEVRGDEFLAAFEELKG</sequence>
<evidence type="ECO:0000255" key="1">
    <source>
        <dbReference type="HAMAP-Rule" id="MF_00639"/>
    </source>
</evidence>